<gene>
    <name evidence="2" type="primary">ddl</name>
    <name type="ordered locus">Mflv_4219</name>
</gene>
<reference key="1">
    <citation type="submission" date="2007-04" db="EMBL/GenBank/DDBJ databases">
        <title>Complete sequence of chromosome of Mycobacterium gilvum PYR-GCK.</title>
        <authorList>
            <consortium name="US DOE Joint Genome Institute"/>
            <person name="Copeland A."/>
            <person name="Lucas S."/>
            <person name="Lapidus A."/>
            <person name="Barry K."/>
            <person name="Detter J.C."/>
            <person name="Glavina del Rio T."/>
            <person name="Hammon N."/>
            <person name="Israni S."/>
            <person name="Dalin E."/>
            <person name="Tice H."/>
            <person name="Pitluck S."/>
            <person name="Chain P."/>
            <person name="Malfatti S."/>
            <person name="Shin M."/>
            <person name="Vergez L."/>
            <person name="Schmutz J."/>
            <person name="Larimer F."/>
            <person name="Land M."/>
            <person name="Hauser L."/>
            <person name="Kyrpides N."/>
            <person name="Mikhailova N."/>
            <person name="Miller C."/>
            <person name="Richardson P."/>
        </authorList>
    </citation>
    <scope>NUCLEOTIDE SEQUENCE [LARGE SCALE GENOMIC DNA]</scope>
    <source>
        <strain>PYR-GCK</strain>
    </source>
</reference>
<evidence type="ECO:0000250" key="1"/>
<evidence type="ECO:0000255" key="2">
    <source>
        <dbReference type="HAMAP-Rule" id="MF_00047"/>
    </source>
</evidence>
<organism>
    <name type="scientific">Mycolicibacterium gilvum (strain PYR-GCK)</name>
    <name type="common">Mycobacterium gilvum (strain PYR-GCK)</name>
    <dbReference type="NCBI Taxonomy" id="350054"/>
    <lineage>
        <taxon>Bacteria</taxon>
        <taxon>Bacillati</taxon>
        <taxon>Actinomycetota</taxon>
        <taxon>Actinomycetes</taxon>
        <taxon>Mycobacteriales</taxon>
        <taxon>Mycobacteriaceae</taxon>
        <taxon>Mycolicibacterium</taxon>
    </lineage>
</organism>
<proteinExistence type="inferred from homology"/>
<accession>A4TE25</accession>
<name>DDL_MYCGI</name>
<sequence>MNARIRVAVVYGGRSSEHAISCVSAGSILRNLDPDRFEVTAVGITPEGSWVLTEGRPETLAITDGKLPGVTGDSGTALTLTADPARRGQLVSLGEAAGEVLASADVVFPVLHGPYGEDGTIQGLLELAGVPYVGAGVLASAAGMDKEFTKKLLASAGLPVGDHVVLRARDSTLSLQDRERLGLPVFVKPSRGGSSIGVSRVTAWDELPAAIELARRHDPKVIIEAAVPGRELECGVLEFPDGHLEASTLGEIRVEGVRGREDGFYDFETKYLDDGAELDVPAKVDDDVAEAIRALSLRAFTAIDCQGLARVDFFLTDDGPVINEINTMPGFTTISMYPRMWAASGVDYPTLLATMVETALARGTGLR</sequence>
<keyword id="KW-0067">ATP-binding</keyword>
<keyword id="KW-0133">Cell shape</keyword>
<keyword id="KW-0961">Cell wall biogenesis/degradation</keyword>
<keyword id="KW-0963">Cytoplasm</keyword>
<keyword id="KW-0436">Ligase</keyword>
<keyword id="KW-0460">Magnesium</keyword>
<keyword id="KW-0464">Manganese</keyword>
<keyword id="KW-0479">Metal-binding</keyword>
<keyword id="KW-0547">Nucleotide-binding</keyword>
<keyword id="KW-0573">Peptidoglycan synthesis</keyword>
<comment type="function">
    <text evidence="2">Cell wall formation.</text>
</comment>
<comment type="catalytic activity">
    <reaction evidence="2">
        <text>2 D-alanine + ATP = D-alanyl-D-alanine + ADP + phosphate + H(+)</text>
        <dbReference type="Rhea" id="RHEA:11224"/>
        <dbReference type="ChEBI" id="CHEBI:15378"/>
        <dbReference type="ChEBI" id="CHEBI:30616"/>
        <dbReference type="ChEBI" id="CHEBI:43474"/>
        <dbReference type="ChEBI" id="CHEBI:57416"/>
        <dbReference type="ChEBI" id="CHEBI:57822"/>
        <dbReference type="ChEBI" id="CHEBI:456216"/>
        <dbReference type="EC" id="6.3.2.4"/>
    </reaction>
</comment>
<comment type="cofactor">
    <cofactor evidence="1">
        <name>Mg(2+)</name>
        <dbReference type="ChEBI" id="CHEBI:18420"/>
    </cofactor>
    <cofactor evidence="1">
        <name>Mn(2+)</name>
        <dbReference type="ChEBI" id="CHEBI:29035"/>
    </cofactor>
    <text evidence="1">Binds 2 magnesium or manganese ions per subunit.</text>
</comment>
<comment type="pathway">
    <text evidence="2">Cell wall biogenesis; peptidoglycan biosynthesis.</text>
</comment>
<comment type="subcellular location">
    <subcellularLocation>
        <location evidence="2">Cytoplasm</location>
    </subcellularLocation>
</comment>
<comment type="similarity">
    <text evidence="2">Belongs to the D-alanine--D-alanine ligase family.</text>
</comment>
<protein>
    <recommendedName>
        <fullName evidence="2">D-alanine--D-alanine ligase</fullName>
        <ecNumber evidence="2">6.3.2.4</ecNumber>
    </recommendedName>
    <alternativeName>
        <fullName evidence="2">D-Ala-D-Ala ligase</fullName>
    </alternativeName>
    <alternativeName>
        <fullName evidence="2">D-alanylalanine synthetase</fullName>
    </alternativeName>
</protein>
<dbReference type="EC" id="6.3.2.4" evidence="2"/>
<dbReference type="EMBL" id="CP000656">
    <property type="protein sequence ID" value="ABP46688.1"/>
    <property type="molecule type" value="Genomic_DNA"/>
</dbReference>
<dbReference type="SMR" id="A4TE25"/>
<dbReference type="STRING" id="350054.Mflv_4219"/>
<dbReference type="KEGG" id="mgi:Mflv_4219"/>
<dbReference type="eggNOG" id="COG1181">
    <property type="taxonomic scope" value="Bacteria"/>
</dbReference>
<dbReference type="HOGENOM" id="CLU_039268_0_1_11"/>
<dbReference type="OrthoDB" id="9813261at2"/>
<dbReference type="UniPathway" id="UPA00219"/>
<dbReference type="GO" id="GO:0005829">
    <property type="term" value="C:cytosol"/>
    <property type="evidence" value="ECO:0007669"/>
    <property type="project" value="TreeGrafter"/>
</dbReference>
<dbReference type="GO" id="GO:0005524">
    <property type="term" value="F:ATP binding"/>
    <property type="evidence" value="ECO:0007669"/>
    <property type="project" value="UniProtKB-KW"/>
</dbReference>
<dbReference type="GO" id="GO:0008716">
    <property type="term" value="F:D-alanine-D-alanine ligase activity"/>
    <property type="evidence" value="ECO:0007669"/>
    <property type="project" value="UniProtKB-UniRule"/>
</dbReference>
<dbReference type="GO" id="GO:0046872">
    <property type="term" value="F:metal ion binding"/>
    <property type="evidence" value="ECO:0007669"/>
    <property type="project" value="UniProtKB-KW"/>
</dbReference>
<dbReference type="GO" id="GO:0071555">
    <property type="term" value="P:cell wall organization"/>
    <property type="evidence" value="ECO:0007669"/>
    <property type="project" value="UniProtKB-KW"/>
</dbReference>
<dbReference type="GO" id="GO:0009252">
    <property type="term" value="P:peptidoglycan biosynthetic process"/>
    <property type="evidence" value="ECO:0007669"/>
    <property type="project" value="UniProtKB-UniRule"/>
</dbReference>
<dbReference type="GO" id="GO:0008360">
    <property type="term" value="P:regulation of cell shape"/>
    <property type="evidence" value="ECO:0007669"/>
    <property type="project" value="UniProtKB-KW"/>
</dbReference>
<dbReference type="FunFam" id="3.30.470.20:FF:000008">
    <property type="entry name" value="D-alanine--D-alanine ligase"/>
    <property type="match status" value="1"/>
</dbReference>
<dbReference type="Gene3D" id="3.40.50.20">
    <property type="match status" value="1"/>
</dbReference>
<dbReference type="Gene3D" id="3.30.1490.20">
    <property type="entry name" value="ATP-grasp fold, A domain"/>
    <property type="match status" value="1"/>
</dbReference>
<dbReference type="Gene3D" id="3.30.470.20">
    <property type="entry name" value="ATP-grasp fold, B domain"/>
    <property type="match status" value="1"/>
</dbReference>
<dbReference type="HAMAP" id="MF_00047">
    <property type="entry name" value="Dala_Dala_lig"/>
    <property type="match status" value="1"/>
</dbReference>
<dbReference type="InterPro" id="IPR011761">
    <property type="entry name" value="ATP-grasp"/>
</dbReference>
<dbReference type="InterPro" id="IPR013815">
    <property type="entry name" value="ATP_grasp_subdomain_1"/>
</dbReference>
<dbReference type="InterPro" id="IPR000291">
    <property type="entry name" value="D-Ala_lig_Van_CS"/>
</dbReference>
<dbReference type="InterPro" id="IPR005905">
    <property type="entry name" value="D_ala_D_ala"/>
</dbReference>
<dbReference type="InterPro" id="IPR011095">
    <property type="entry name" value="Dala_Dala_lig_C"/>
</dbReference>
<dbReference type="InterPro" id="IPR011127">
    <property type="entry name" value="Dala_Dala_lig_N"/>
</dbReference>
<dbReference type="InterPro" id="IPR016185">
    <property type="entry name" value="PreATP-grasp_dom_sf"/>
</dbReference>
<dbReference type="NCBIfam" id="TIGR01205">
    <property type="entry name" value="D_ala_D_alaTIGR"/>
    <property type="match status" value="1"/>
</dbReference>
<dbReference type="NCBIfam" id="NF002378">
    <property type="entry name" value="PRK01372.1"/>
    <property type="match status" value="1"/>
</dbReference>
<dbReference type="NCBIfam" id="NF002528">
    <property type="entry name" value="PRK01966.1-4"/>
    <property type="match status" value="1"/>
</dbReference>
<dbReference type="PANTHER" id="PTHR23132">
    <property type="entry name" value="D-ALANINE--D-ALANINE LIGASE"/>
    <property type="match status" value="1"/>
</dbReference>
<dbReference type="PANTHER" id="PTHR23132:SF25">
    <property type="entry name" value="D-ALANINE--D-ALANINE LIGASE A"/>
    <property type="match status" value="1"/>
</dbReference>
<dbReference type="Pfam" id="PF07478">
    <property type="entry name" value="Dala_Dala_lig_C"/>
    <property type="match status" value="1"/>
</dbReference>
<dbReference type="Pfam" id="PF01820">
    <property type="entry name" value="Dala_Dala_lig_N"/>
    <property type="match status" value="1"/>
</dbReference>
<dbReference type="PIRSF" id="PIRSF039102">
    <property type="entry name" value="Ddl/VanB"/>
    <property type="match status" value="1"/>
</dbReference>
<dbReference type="SUPFAM" id="SSF56059">
    <property type="entry name" value="Glutathione synthetase ATP-binding domain-like"/>
    <property type="match status" value="1"/>
</dbReference>
<dbReference type="SUPFAM" id="SSF52440">
    <property type="entry name" value="PreATP-grasp domain"/>
    <property type="match status" value="1"/>
</dbReference>
<dbReference type="PROSITE" id="PS50975">
    <property type="entry name" value="ATP_GRASP"/>
    <property type="match status" value="1"/>
</dbReference>
<dbReference type="PROSITE" id="PS00843">
    <property type="entry name" value="DALA_DALA_LIGASE_1"/>
    <property type="match status" value="1"/>
</dbReference>
<dbReference type="PROSITE" id="PS00844">
    <property type="entry name" value="DALA_DALA_LIGASE_2"/>
    <property type="match status" value="1"/>
</dbReference>
<feature type="chain" id="PRO_0000341136" description="D-alanine--D-alanine ligase">
    <location>
        <begin position="1"/>
        <end position="367"/>
    </location>
</feature>
<feature type="domain" description="ATP-grasp" evidence="2">
    <location>
        <begin position="150"/>
        <end position="357"/>
    </location>
</feature>
<feature type="binding site" evidence="2">
    <location>
        <begin position="178"/>
        <end position="233"/>
    </location>
    <ligand>
        <name>ATP</name>
        <dbReference type="ChEBI" id="CHEBI:30616"/>
    </ligand>
</feature>
<feature type="binding site" evidence="2">
    <location>
        <position position="312"/>
    </location>
    <ligand>
        <name>Mg(2+)</name>
        <dbReference type="ChEBI" id="CHEBI:18420"/>
        <label>1</label>
    </ligand>
</feature>
<feature type="binding site" evidence="2">
    <location>
        <position position="324"/>
    </location>
    <ligand>
        <name>Mg(2+)</name>
        <dbReference type="ChEBI" id="CHEBI:18420"/>
        <label>1</label>
    </ligand>
</feature>
<feature type="binding site" evidence="2">
    <location>
        <position position="324"/>
    </location>
    <ligand>
        <name>Mg(2+)</name>
        <dbReference type="ChEBI" id="CHEBI:18420"/>
        <label>2</label>
    </ligand>
</feature>
<feature type="binding site" evidence="2">
    <location>
        <position position="326"/>
    </location>
    <ligand>
        <name>Mg(2+)</name>
        <dbReference type="ChEBI" id="CHEBI:18420"/>
        <label>2</label>
    </ligand>
</feature>